<proteinExistence type="inferred from homology"/>
<reference key="1">
    <citation type="journal article" date="1992" name="Science">
        <title>Carnivorous plants: phylogeny and structural evolution.</title>
        <authorList>
            <person name="Albert V.A."/>
            <person name="Williams S.E."/>
            <person name="Chase M.W."/>
        </authorList>
    </citation>
    <scope>NUCLEOTIDE SEQUENCE [GENOMIC DNA]</scope>
</reference>
<comment type="function">
    <text evidence="1">RuBisCO catalyzes two reactions: the carboxylation of D-ribulose 1,5-bisphosphate, the primary event in carbon dioxide fixation, as well as the oxidative fragmentation of the pentose substrate in the photorespiration process. Both reactions occur simultaneously and in competition at the same active site.</text>
</comment>
<comment type="catalytic activity">
    <reaction evidence="1">
        <text>2 (2R)-3-phosphoglycerate + 2 H(+) = D-ribulose 1,5-bisphosphate + CO2 + H2O</text>
        <dbReference type="Rhea" id="RHEA:23124"/>
        <dbReference type="ChEBI" id="CHEBI:15377"/>
        <dbReference type="ChEBI" id="CHEBI:15378"/>
        <dbReference type="ChEBI" id="CHEBI:16526"/>
        <dbReference type="ChEBI" id="CHEBI:57870"/>
        <dbReference type="ChEBI" id="CHEBI:58272"/>
        <dbReference type="EC" id="4.1.1.39"/>
    </reaction>
</comment>
<comment type="catalytic activity">
    <reaction evidence="1">
        <text>D-ribulose 1,5-bisphosphate + O2 = 2-phosphoglycolate + (2R)-3-phosphoglycerate + 2 H(+)</text>
        <dbReference type="Rhea" id="RHEA:36631"/>
        <dbReference type="ChEBI" id="CHEBI:15378"/>
        <dbReference type="ChEBI" id="CHEBI:15379"/>
        <dbReference type="ChEBI" id="CHEBI:57870"/>
        <dbReference type="ChEBI" id="CHEBI:58033"/>
        <dbReference type="ChEBI" id="CHEBI:58272"/>
    </reaction>
</comment>
<comment type="cofactor">
    <cofactor evidence="1">
        <name>Mg(2+)</name>
        <dbReference type="ChEBI" id="CHEBI:18420"/>
    </cofactor>
    <text evidence="1">Binds 1 Mg(2+) ion per subunit.</text>
</comment>
<comment type="subunit">
    <text evidence="1">Heterohexadecamer of 8 large chains and 8 small chains; disulfide-linked. The disulfide link is formed within the large subunit homodimers.</text>
</comment>
<comment type="subcellular location">
    <subcellularLocation>
        <location>Plastid</location>
        <location>Chloroplast</location>
    </subcellularLocation>
</comment>
<comment type="PTM">
    <text evidence="1">The disulfide bond which can form in the large chain dimeric partners within the hexadecamer appears to be associated with oxidative stress and protein turnover.</text>
</comment>
<comment type="miscellaneous">
    <text evidence="1">The basic functional RuBisCO is composed of a large chain homodimer in a 'head-to-tail' conformation. In form I RuBisCO this homodimer is arranged in a barrel-like tetramer with the small subunits forming a tetrameric 'cap' on each end of the 'barrel'.</text>
</comment>
<comment type="similarity">
    <text evidence="1">Belongs to the RuBisCO large chain family. Type I subfamily.</text>
</comment>
<keyword id="KW-0113">Calvin cycle</keyword>
<keyword id="KW-0120">Carbon dioxide fixation</keyword>
<keyword id="KW-0150">Chloroplast</keyword>
<keyword id="KW-1015">Disulfide bond</keyword>
<keyword id="KW-0456">Lyase</keyword>
<keyword id="KW-0460">Magnesium</keyword>
<keyword id="KW-0479">Metal-binding</keyword>
<keyword id="KW-0488">Methylation</keyword>
<keyword id="KW-0503">Monooxygenase</keyword>
<keyword id="KW-0560">Oxidoreductase</keyword>
<keyword id="KW-0601">Photorespiration</keyword>
<keyword id="KW-0602">Photosynthesis</keyword>
<keyword id="KW-0934">Plastid</keyword>
<feature type="chain" id="PRO_0000062385" description="Ribulose bisphosphate carboxylase large chain">
    <location>
        <begin position="1" status="less than"/>
        <end position="465"/>
    </location>
</feature>
<feature type="active site" description="Proton acceptor" evidence="1">
    <location>
        <position position="165"/>
    </location>
</feature>
<feature type="active site" description="Proton acceptor" evidence="1">
    <location>
        <position position="284"/>
    </location>
</feature>
<feature type="binding site" description="in homodimeric partner" evidence="1">
    <location>
        <position position="113"/>
    </location>
    <ligand>
        <name>substrate</name>
    </ligand>
</feature>
<feature type="binding site" evidence="1">
    <location>
        <position position="163"/>
    </location>
    <ligand>
        <name>substrate</name>
    </ligand>
</feature>
<feature type="binding site" evidence="1">
    <location>
        <position position="167"/>
    </location>
    <ligand>
        <name>substrate</name>
    </ligand>
</feature>
<feature type="binding site" description="via carbamate group" evidence="1">
    <location>
        <position position="191"/>
    </location>
    <ligand>
        <name>Mg(2+)</name>
        <dbReference type="ChEBI" id="CHEBI:18420"/>
    </ligand>
</feature>
<feature type="binding site" evidence="1">
    <location>
        <position position="193"/>
    </location>
    <ligand>
        <name>Mg(2+)</name>
        <dbReference type="ChEBI" id="CHEBI:18420"/>
    </ligand>
</feature>
<feature type="binding site" evidence="1">
    <location>
        <position position="194"/>
    </location>
    <ligand>
        <name>Mg(2+)</name>
        <dbReference type="ChEBI" id="CHEBI:18420"/>
    </ligand>
</feature>
<feature type="binding site" evidence="1">
    <location>
        <position position="285"/>
    </location>
    <ligand>
        <name>substrate</name>
    </ligand>
</feature>
<feature type="binding site" evidence="1">
    <location>
        <position position="317"/>
    </location>
    <ligand>
        <name>substrate</name>
    </ligand>
</feature>
<feature type="binding site" evidence="1">
    <location>
        <position position="369"/>
    </location>
    <ligand>
        <name>substrate</name>
    </ligand>
</feature>
<feature type="site" description="Transition state stabilizer" evidence="1">
    <location>
        <position position="324"/>
    </location>
</feature>
<feature type="modified residue" description="N6,N6,N6-trimethyllysine" evidence="1">
    <location>
        <position position="4"/>
    </location>
</feature>
<feature type="modified residue" description="N6-carboxylysine" evidence="1">
    <location>
        <position position="191"/>
    </location>
</feature>
<feature type="disulfide bond" description="Interchain; in linked form" evidence="1">
    <location>
        <position position="237"/>
    </location>
</feature>
<feature type="non-terminal residue">
    <location>
        <position position="1"/>
    </location>
</feature>
<sequence length="465" mass="51504">VGFKAGVKDYKLTYYTPDYVTKDTDILAAFRVTPQPGVPPEEAGAAVAAESSTGTWTTVWTDGLTSLDRYKGRCYNIEPVAGEENQYICYVAYPLDLFEEGSVTNMFTSIVGNVFGFKALRALRLEDLRIPPAYSKTFQGPPHGIQVERDKLNKYGRPLLGCTIKPKLGLSAKNYGRAVYECLRGGLDFTKDDENVNSQPFMRWRDRFLFCAEAIFKSQAETGEIKGHYLNATAGTCEEMIKRAVFARELGAPIVMHDYLTGGFTANTSLAHYCRDNGLLLHIHRAMHAVIDRQKNHGMHFRVLAKALRLSGGDHIHAGTVVGKLEGERDITLGFVDLLRDDFVEKDRSRGIYFTQDWVSLPGVLPVASGGIHVWHMPALTEIFGDDSVLQFGGGTLGHPWGNAPGAVANRVALEACVQARNEGRDLAREGNDIIRDASKWSPELAAACEVWKEIKFEFEAMDTL</sequence>
<organism>
    <name type="scientific">Bursera inaguensis</name>
    <name type="common">Elaphrium inaguense</name>
    <dbReference type="NCBI Taxonomy" id="4016"/>
    <lineage>
        <taxon>Eukaryota</taxon>
        <taxon>Viridiplantae</taxon>
        <taxon>Streptophyta</taxon>
        <taxon>Embryophyta</taxon>
        <taxon>Tracheophyta</taxon>
        <taxon>Spermatophyta</taxon>
        <taxon>Magnoliopsida</taxon>
        <taxon>eudicotyledons</taxon>
        <taxon>Gunneridae</taxon>
        <taxon>Pentapetalae</taxon>
        <taxon>rosids</taxon>
        <taxon>malvids</taxon>
        <taxon>Sapindales</taxon>
        <taxon>Burseraceae</taxon>
        <taxon>Bursera</taxon>
    </lineage>
</organism>
<gene>
    <name evidence="1" type="primary">rbcL</name>
</gene>
<evidence type="ECO:0000255" key="1">
    <source>
        <dbReference type="HAMAP-Rule" id="MF_01338"/>
    </source>
</evidence>
<name>RBL_BURIN</name>
<dbReference type="EC" id="4.1.1.39" evidence="1"/>
<dbReference type="EMBL" id="L01890">
    <property type="protein sequence ID" value="AAA84092.2"/>
    <property type="molecule type" value="Genomic_DNA"/>
</dbReference>
<dbReference type="SMR" id="P28385"/>
<dbReference type="GO" id="GO:0009507">
    <property type="term" value="C:chloroplast"/>
    <property type="evidence" value="ECO:0007669"/>
    <property type="project" value="UniProtKB-SubCell"/>
</dbReference>
<dbReference type="GO" id="GO:0000287">
    <property type="term" value="F:magnesium ion binding"/>
    <property type="evidence" value="ECO:0007669"/>
    <property type="project" value="InterPro"/>
</dbReference>
<dbReference type="GO" id="GO:0004497">
    <property type="term" value="F:monooxygenase activity"/>
    <property type="evidence" value="ECO:0007669"/>
    <property type="project" value="UniProtKB-KW"/>
</dbReference>
<dbReference type="GO" id="GO:0016984">
    <property type="term" value="F:ribulose-bisphosphate carboxylase activity"/>
    <property type="evidence" value="ECO:0007669"/>
    <property type="project" value="UniProtKB-EC"/>
</dbReference>
<dbReference type="GO" id="GO:0009853">
    <property type="term" value="P:photorespiration"/>
    <property type="evidence" value="ECO:0007669"/>
    <property type="project" value="UniProtKB-KW"/>
</dbReference>
<dbReference type="GO" id="GO:0019253">
    <property type="term" value="P:reductive pentose-phosphate cycle"/>
    <property type="evidence" value="ECO:0007669"/>
    <property type="project" value="UniProtKB-KW"/>
</dbReference>
<dbReference type="CDD" id="cd08212">
    <property type="entry name" value="RuBisCO_large_I"/>
    <property type="match status" value="1"/>
</dbReference>
<dbReference type="FunFam" id="3.20.20.110:FF:000001">
    <property type="entry name" value="Ribulose bisphosphate carboxylase large chain"/>
    <property type="match status" value="1"/>
</dbReference>
<dbReference type="FunFam" id="3.30.70.150:FF:000001">
    <property type="entry name" value="Ribulose bisphosphate carboxylase large chain"/>
    <property type="match status" value="1"/>
</dbReference>
<dbReference type="Gene3D" id="3.20.20.110">
    <property type="entry name" value="Ribulose bisphosphate carboxylase, large subunit, C-terminal domain"/>
    <property type="match status" value="1"/>
</dbReference>
<dbReference type="Gene3D" id="3.30.70.150">
    <property type="entry name" value="RuBisCO large subunit, N-terminal domain"/>
    <property type="match status" value="1"/>
</dbReference>
<dbReference type="HAMAP" id="MF_01338">
    <property type="entry name" value="RuBisCO_L_type1"/>
    <property type="match status" value="1"/>
</dbReference>
<dbReference type="InterPro" id="IPR033966">
    <property type="entry name" value="RuBisCO"/>
</dbReference>
<dbReference type="InterPro" id="IPR020878">
    <property type="entry name" value="RuBisCo_large_chain_AS"/>
</dbReference>
<dbReference type="InterPro" id="IPR000685">
    <property type="entry name" value="RuBisCO_lsu_C"/>
</dbReference>
<dbReference type="InterPro" id="IPR036376">
    <property type="entry name" value="RuBisCO_lsu_C_sf"/>
</dbReference>
<dbReference type="InterPro" id="IPR017443">
    <property type="entry name" value="RuBisCO_lsu_fd_N"/>
</dbReference>
<dbReference type="InterPro" id="IPR036422">
    <property type="entry name" value="RuBisCO_lsu_N_sf"/>
</dbReference>
<dbReference type="InterPro" id="IPR020888">
    <property type="entry name" value="RuBisCO_lsuI"/>
</dbReference>
<dbReference type="NCBIfam" id="NF003252">
    <property type="entry name" value="PRK04208.1"/>
    <property type="match status" value="1"/>
</dbReference>
<dbReference type="PANTHER" id="PTHR42704">
    <property type="entry name" value="RIBULOSE BISPHOSPHATE CARBOXYLASE"/>
    <property type="match status" value="1"/>
</dbReference>
<dbReference type="PANTHER" id="PTHR42704:SF15">
    <property type="entry name" value="RIBULOSE BISPHOSPHATE CARBOXYLASE LARGE CHAIN"/>
    <property type="match status" value="1"/>
</dbReference>
<dbReference type="Pfam" id="PF00016">
    <property type="entry name" value="RuBisCO_large"/>
    <property type="match status" value="1"/>
</dbReference>
<dbReference type="Pfam" id="PF02788">
    <property type="entry name" value="RuBisCO_large_N"/>
    <property type="match status" value="1"/>
</dbReference>
<dbReference type="SFLD" id="SFLDG01052">
    <property type="entry name" value="RuBisCO"/>
    <property type="match status" value="1"/>
</dbReference>
<dbReference type="SFLD" id="SFLDS00014">
    <property type="entry name" value="RuBisCO"/>
    <property type="match status" value="1"/>
</dbReference>
<dbReference type="SFLD" id="SFLDG00301">
    <property type="entry name" value="RuBisCO-like_proteins"/>
    <property type="match status" value="1"/>
</dbReference>
<dbReference type="SUPFAM" id="SSF51649">
    <property type="entry name" value="RuBisCo, C-terminal domain"/>
    <property type="match status" value="1"/>
</dbReference>
<dbReference type="SUPFAM" id="SSF54966">
    <property type="entry name" value="RuBisCO, large subunit, small (N-terminal) domain"/>
    <property type="match status" value="1"/>
</dbReference>
<dbReference type="PROSITE" id="PS00157">
    <property type="entry name" value="RUBISCO_LARGE"/>
    <property type="match status" value="1"/>
</dbReference>
<accession>P28385</accession>
<geneLocation type="chloroplast"/>
<protein>
    <recommendedName>
        <fullName evidence="1">Ribulose bisphosphate carboxylase large chain</fullName>
        <shortName evidence="1">RuBisCO large subunit</shortName>
        <ecNumber evidence="1">4.1.1.39</ecNumber>
    </recommendedName>
</protein>